<feature type="chain" id="PRO_0000183518" description="Cytochrome c oxidase subunit 2">
    <location>
        <begin position="1"/>
        <end position="230"/>
    </location>
</feature>
<feature type="topological domain" description="Mitochondrial intermembrane" evidence="2">
    <location>
        <begin position="1"/>
        <end position="26"/>
    </location>
</feature>
<feature type="transmembrane region" description="Helical" evidence="2">
    <location>
        <begin position="27"/>
        <end position="48"/>
    </location>
</feature>
<feature type="topological domain" description="Mitochondrial matrix" evidence="2">
    <location>
        <begin position="49"/>
        <end position="62"/>
    </location>
</feature>
<feature type="transmembrane region" description="Helical" evidence="2">
    <location>
        <begin position="63"/>
        <end position="82"/>
    </location>
</feature>
<feature type="topological domain" description="Mitochondrial intermembrane" evidence="2">
    <location>
        <begin position="83"/>
        <end position="230"/>
    </location>
</feature>
<feature type="binding site" evidence="1">
    <location>
        <position position="161"/>
    </location>
    <ligand>
        <name>Cu cation</name>
        <dbReference type="ChEBI" id="CHEBI:23378"/>
        <label>A1</label>
    </ligand>
</feature>
<feature type="binding site" evidence="1">
    <location>
        <position position="196"/>
    </location>
    <ligand>
        <name>Cu cation</name>
        <dbReference type="ChEBI" id="CHEBI:23378"/>
        <label>A1</label>
    </ligand>
</feature>
<feature type="binding site" evidence="1">
    <location>
        <position position="196"/>
    </location>
    <ligand>
        <name>Cu cation</name>
        <dbReference type="ChEBI" id="CHEBI:23378"/>
        <label>A2</label>
    </ligand>
</feature>
<feature type="binding site" evidence="1">
    <location>
        <position position="198"/>
    </location>
    <ligand>
        <name>Cu cation</name>
        <dbReference type="ChEBI" id="CHEBI:23378"/>
        <label>A2</label>
    </ligand>
</feature>
<feature type="binding site" evidence="1">
    <location>
        <position position="198"/>
    </location>
    <ligand>
        <name>Mg(2+)</name>
        <dbReference type="ChEBI" id="CHEBI:18420"/>
        <note>ligand shared with subunit 1</note>
    </ligand>
</feature>
<feature type="binding site" evidence="1">
    <location>
        <position position="200"/>
    </location>
    <ligand>
        <name>Cu cation</name>
        <dbReference type="ChEBI" id="CHEBI:23378"/>
        <label>A1</label>
    </ligand>
</feature>
<feature type="binding site" evidence="1">
    <location>
        <position position="200"/>
    </location>
    <ligand>
        <name>Cu cation</name>
        <dbReference type="ChEBI" id="CHEBI:23378"/>
        <label>A2</label>
    </ligand>
</feature>
<feature type="binding site" evidence="1">
    <location>
        <position position="204"/>
    </location>
    <ligand>
        <name>Cu cation</name>
        <dbReference type="ChEBI" id="CHEBI:23378"/>
        <label>A2</label>
    </ligand>
</feature>
<feature type="binding site" evidence="1">
    <location>
        <position position="207"/>
    </location>
    <ligand>
        <name>Cu cation</name>
        <dbReference type="ChEBI" id="CHEBI:23378"/>
        <label>A1</label>
    </ligand>
</feature>
<evidence type="ECO:0000250" key="1">
    <source>
        <dbReference type="UniProtKB" id="P00410"/>
    </source>
</evidence>
<evidence type="ECO:0000255" key="2"/>
<evidence type="ECO:0000305" key="3"/>
<evidence type="ECO:0000312" key="4">
    <source>
        <dbReference type="Proteomes" id="UP000001554"/>
    </source>
</evidence>
<proteinExistence type="inferred from homology"/>
<reference key="1">
    <citation type="journal article" date="1999" name="Mol. Biol. Evol.">
        <title>Complete sequence, gene arrangement, and genetic code of mitochondrial DNA of the cephalochordate Branchiostoma floridae (Amphioxus).</title>
        <authorList>
            <person name="Boore J.L."/>
            <person name="Daehler L.L."/>
            <person name="Brown W.M."/>
        </authorList>
    </citation>
    <scope>NUCLEOTIDE SEQUENCE [LARGE SCALE GENOMIC DNA]</scope>
    <source>
        <strain evidence="4">S238N-H82</strain>
    </source>
</reference>
<comment type="function">
    <text evidence="1">Component of the cytochrome c oxidase, the last enzyme in the mitochondrial electron transport chain which drives oxidative phosphorylation. The respiratory chain contains 3 multisubunit complexes succinate dehydrogenase (complex II, CII), ubiquinol-cytochrome c oxidoreductase (cytochrome b-c1 complex, complex III, CIII) and cytochrome c oxidase (complex IV, CIV), that cooperate to transfer electrons derived from NADH and succinate to molecular oxygen, creating an electrochemical gradient over the inner membrane that drives transmembrane transport and the ATP synthase. Cytochrome c oxidase is the component of the respiratory chain that catalyzes the reduction of oxygen to water. Electrons originating from reduced cytochrome c in the intermembrane space (IMS) are transferred via the dinuclear copper A center (CU(A)) of subunit 2 and heme A of subunit 1 to the active site in subunit 1, a binuclear center (BNC) formed by heme A3 and copper B (CU(B)). The BNC reduces molecular oxygen to 2 water molecules using 4 electrons from cytochrome c in the IMS and 4 protons from the mitochondrial matrix.</text>
</comment>
<comment type="catalytic activity">
    <reaction evidence="1">
        <text>4 Fe(II)-[cytochrome c] + O2 + 8 H(+)(in) = 4 Fe(III)-[cytochrome c] + 2 H2O + 4 H(+)(out)</text>
        <dbReference type="Rhea" id="RHEA:11436"/>
        <dbReference type="Rhea" id="RHEA-COMP:10350"/>
        <dbReference type="Rhea" id="RHEA-COMP:14399"/>
        <dbReference type="ChEBI" id="CHEBI:15377"/>
        <dbReference type="ChEBI" id="CHEBI:15378"/>
        <dbReference type="ChEBI" id="CHEBI:15379"/>
        <dbReference type="ChEBI" id="CHEBI:29033"/>
        <dbReference type="ChEBI" id="CHEBI:29034"/>
        <dbReference type="EC" id="7.1.1.9"/>
    </reaction>
    <physiologicalReaction direction="left-to-right" evidence="1">
        <dbReference type="Rhea" id="RHEA:11437"/>
    </physiologicalReaction>
</comment>
<comment type="cofactor">
    <cofactor evidence="1">
        <name>Cu cation</name>
        <dbReference type="ChEBI" id="CHEBI:23378"/>
    </cofactor>
    <text evidence="1">Binds a dinuclear copper A center per subunit.</text>
</comment>
<comment type="subunit">
    <text evidence="1">Component of the cytochrome c oxidase (complex IV, CIV), a multisubunit enzyme composed of a catalytic core of 3 subunits and several supernumerary subunits. The complex exists as a monomer or a dimer and forms supercomplexes (SCs) in the inner mitochondrial membrane with ubiquinol-cytochrome c oxidoreductase (cytochrome b-c1 complex, complex III, CIII).</text>
</comment>
<comment type="subcellular location">
    <subcellularLocation>
        <location evidence="1">Mitochondrion inner membrane</location>
        <topology evidence="1">Multi-pass membrane protein</topology>
    </subcellularLocation>
</comment>
<comment type="similarity">
    <text evidence="3">Belongs to the cytochrome c oxidase subunit 2 family.</text>
</comment>
<organism>
    <name type="scientific">Branchiostoma floridae</name>
    <name type="common">Florida lancelet</name>
    <name type="synonym">Amphioxus</name>
    <dbReference type="NCBI Taxonomy" id="7739"/>
    <lineage>
        <taxon>Eukaryota</taxon>
        <taxon>Metazoa</taxon>
        <taxon>Chordata</taxon>
        <taxon>Cephalochordata</taxon>
        <taxon>Leptocardii</taxon>
        <taxon>Amphioxiformes</taxon>
        <taxon>Branchiostomatidae</taxon>
        <taxon>Branchiostoma</taxon>
    </lineage>
</organism>
<sequence length="230" mass="25964">MATPAQLGLMDAASPVMEEMIYFHDHVMLVLILITCLIFYSMLVLISSKYIYRFLTDGHVIETVWTVIPAIILVVVALPSLKLLYLTDELDNPQLTIKSVGHQWYWSYEYTDYYDIEFDSYMLPLGDLSKGDARLLEVDNRVVLPVDTSVRVLVTAADVIHSWTVPSLGLKMDAVPGRLNQLALQCSRVGTFYGQCSEICGANHSFMPIVIEAVPVEVFEGWCDMMLDEE</sequence>
<protein>
    <recommendedName>
        <fullName>Cytochrome c oxidase subunit 2</fullName>
        <ecNumber>7.1.1.9</ecNumber>
    </recommendedName>
    <alternativeName>
        <fullName>Cytochrome c oxidase polypeptide II</fullName>
    </alternativeName>
</protein>
<keyword id="KW-0186">Copper</keyword>
<keyword id="KW-0249">Electron transport</keyword>
<keyword id="KW-0460">Magnesium</keyword>
<keyword id="KW-0472">Membrane</keyword>
<keyword id="KW-0479">Metal-binding</keyword>
<keyword id="KW-0496">Mitochondrion</keyword>
<keyword id="KW-0999">Mitochondrion inner membrane</keyword>
<keyword id="KW-1185">Reference proteome</keyword>
<keyword id="KW-0679">Respiratory chain</keyword>
<keyword id="KW-1278">Translocase</keyword>
<keyword id="KW-0812">Transmembrane</keyword>
<keyword id="KW-1133">Transmembrane helix</keyword>
<keyword id="KW-0813">Transport</keyword>
<accession>O47428</accession>
<dbReference type="EC" id="7.1.1.9"/>
<dbReference type="EMBL" id="AF098298">
    <property type="protein sequence ID" value="AAB87997.1"/>
    <property type="molecule type" value="Genomic_DNA"/>
</dbReference>
<dbReference type="SMR" id="O47428"/>
<dbReference type="FunCoup" id="O47428">
    <property type="interactions" value="54"/>
</dbReference>
<dbReference type="STRING" id="7739.O47428"/>
<dbReference type="KEGG" id="bfo:808727"/>
<dbReference type="CTD" id="4513"/>
<dbReference type="InParanoid" id="O47428"/>
<dbReference type="OMA" id="WSYEYTD"/>
<dbReference type="OrthoDB" id="539285at2759"/>
<dbReference type="Proteomes" id="UP000001554">
    <property type="component" value="Mitochondrion MT"/>
</dbReference>
<dbReference type="GO" id="GO:0005743">
    <property type="term" value="C:mitochondrial inner membrane"/>
    <property type="evidence" value="ECO:0007669"/>
    <property type="project" value="UniProtKB-SubCell"/>
</dbReference>
<dbReference type="GO" id="GO:0005507">
    <property type="term" value="F:copper ion binding"/>
    <property type="evidence" value="ECO:0007669"/>
    <property type="project" value="InterPro"/>
</dbReference>
<dbReference type="GO" id="GO:0004129">
    <property type="term" value="F:cytochrome-c oxidase activity"/>
    <property type="evidence" value="ECO:0007669"/>
    <property type="project" value="UniProtKB-EC"/>
</dbReference>
<dbReference type="GO" id="GO:0042773">
    <property type="term" value="P:ATP synthesis coupled electron transport"/>
    <property type="evidence" value="ECO:0000318"/>
    <property type="project" value="GO_Central"/>
</dbReference>
<dbReference type="CDD" id="cd13912">
    <property type="entry name" value="CcO_II_C"/>
    <property type="match status" value="1"/>
</dbReference>
<dbReference type="FunFam" id="1.10.287.90:FF:000017">
    <property type="entry name" value="Cytochrome c oxidase subunit 2"/>
    <property type="match status" value="1"/>
</dbReference>
<dbReference type="FunFam" id="2.60.40.420:FF:000001">
    <property type="entry name" value="Cytochrome c oxidase subunit 2"/>
    <property type="match status" value="1"/>
</dbReference>
<dbReference type="Gene3D" id="1.10.287.90">
    <property type="match status" value="1"/>
</dbReference>
<dbReference type="Gene3D" id="2.60.40.420">
    <property type="entry name" value="Cupredoxins - blue copper proteins"/>
    <property type="match status" value="1"/>
</dbReference>
<dbReference type="InterPro" id="IPR045187">
    <property type="entry name" value="CcO_II"/>
</dbReference>
<dbReference type="InterPro" id="IPR002429">
    <property type="entry name" value="CcO_II-like_C"/>
</dbReference>
<dbReference type="InterPro" id="IPR034210">
    <property type="entry name" value="CcO_II_C"/>
</dbReference>
<dbReference type="InterPro" id="IPR001505">
    <property type="entry name" value="Copper_CuA"/>
</dbReference>
<dbReference type="InterPro" id="IPR008972">
    <property type="entry name" value="Cupredoxin"/>
</dbReference>
<dbReference type="InterPro" id="IPR014222">
    <property type="entry name" value="Cyt_c_oxidase_su2"/>
</dbReference>
<dbReference type="InterPro" id="IPR011759">
    <property type="entry name" value="Cyt_c_oxidase_su2_TM_dom"/>
</dbReference>
<dbReference type="InterPro" id="IPR036257">
    <property type="entry name" value="Cyt_c_oxidase_su2_TM_sf"/>
</dbReference>
<dbReference type="NCBIfam" id="TIGR02866">
    <property type="entry name" value="CoxB"/>
    <property type="match status" value="1"/>
</dbReference>
<dbReference type="PANTHER" id="PTHR22888:SF9">
    <property type="entry name" value="CYTOCHROME C OXIDASE SUBUNIT 2"/>
    <property type="match status" value="1"/>
</dbReference>
<dbReference type="PANTHER" id="PTHR22888">
    <property type="entry name" value="CYTOCHROME C OXIDASE, SUBUNIT II"/>
    <property type="match status" value="1"/>
</dbReference>
<dbReference type="Pfam" id="PF00116">
    <property type="entry name" value="COX2"/>
    <property type="match status" value="1"/>
</dbReference>
<dbReference type="Pfam" id="PF02790">
    <property type="entry name" value="COX2_TM"/>
    <property type="match status" value="1"/>
</dbReference>
<dbReference type="PRINTS" id="PR01166">
    <property type="entry name" value="CYCOXIDASEII"/>
</dbReference>
<dbReference type="SUPFAM" id="SSF49503">
    <property type="entry name" value="Cupredoxins"/>
    <property type="match status" value="1"/>
</dbReference>
<dbReference type="SUPFAM" id="SSF81464">
    <property type="entry name" value="Cytochrome c oxidase subunit II-like, transmembrane region"/>
    <property type="match status" value="1"/>
</dbReference>
<dbReference type="PROSITE" id="PS00078">
    <property type="entry name" value="COX2"/>
    <property type="match status" value="1"/>
</dbReference>
<dbReference type="PROSITE" id="PS50857">
    <property type="entry name" value="COX2_CUA"/>
    <property type="match status" value="1"/>
</dbReference>
<dbReference type="PROSITE" id="PS50999">
    <property type="entry name" value="COX2_TM"/>
    <property type="match status" value="1"/>
</dbReference>
<name>COX2_BRAFL</name>
<gene>
    <name type="primary">COII</name>
</gene>
<geneLocation type="mitochondrion"/>